<protein>
    <recommendedName>
        <fullName evidence="1">DNA-binding protein Fis</fullName>
    </recommendedName>
</protein>
<accession>B5YSY6</accession>
<keyword id="KW-0010">Activator</keyword>
<keyword id="KW-0238">DNA-binding</keyword>
<keyword id="KW-0804">Transcription</keyword>
<keyword id="KW-0805">Transcription regulation</keyword>
<organism>
    <name type="scientific">Escherichia coli O157:H7 (strain EC4115 / EHEC)</name>
    <dbReference type="NCBI Taxonomy" id="444450"/>
    <lineage>
        <taxon>Bacteria</taxon>
        <taxon>Pseudomonadati</taxon>
        <taxon>Pseudomonadota</taxon>
        <taxon>Gammaproteobacteria</taxon>
        <taxon>Enterobacterales</taxon>
        <taxon>Enterobacteriaceae</taxon>
        <taxon>Escherichia</taxon>
    </lineage>
</organism>
<proteinExistence type="inferred from homology"/>
<feature type="chain" id="PRO_1000097451" description="DNA-binding protein Fis">
    <location>
        <begin position="1"/>
        <end position="98"/>
    </location>
</feature>
<feature type="DNA-binding region" description="H-T-H motif" evidence="1">
    <location>
        <begin position="74"/>
        <end position="93"/>
    </location>
</feature>
<dbReference type="EMBL" id="CP001164">
    <property type="protein sequence ID" value="ACI37142.1"/>
    <property type="molecule type" value="Genomic_DNA"/>
</dbReference>
<dbReference type="RefSeq" id="WP_000462905.1">
    <property type="nucleotide sequence ID" value="NC_011353.1"/>
</dbReference>
<dbReference type="SMR" id="B5YSY6"/>
<dbReference type="GeneID" id="98390389"/>
<dbReference type="KEGG" id="ecf:ECH74115_4578"/>
<dbReference type="HOGENOM" id="CLU_158040_3_0_6"/>
<dbReference type="GO" id="GO:0003700">
    <property type="term" value="F:DNA-binding transcription factor activity"/>
    <property type="evidence" value="ECO:0007669"/>
    <property type="project" value="UniProtKB-UniRule"/>
</dbReference>
<dbReference type="GO" id="GO:0043565">
    <property type="term" value="F:sequence-specific DNA binding"/>
    <property type="evidence" value="ECO:0007669"/>
    <property type="project" value="InterPro"/>
</dbReference>
<dbReference type="FunFam" id="1.10.10.60:FF:000006">
    <property type="entry name" value="DNA-binding protein Fis"/>
    <property type="match status" value="1"/>
</dbReference>
<dbReference type="Gene3D" id="1.10.10.60">
    <property type="entry name" value="Homeodomain-like"/>
    <property type="match status" value="1"/>
</dbReference>
<dbReference type="HAMAP" id="MF_00166">
    <property type="entry name" value="DNA_binding_Fis"/>
    <property type="match status" value="1"/>
</dbReference>
<dbReference type="InterPro" id="IPR005412">
    <property type="entry name" value="Fis_DNA-bd"/>
</dbReference>
<dbReference type="InterPro" id="IPR009057">
    <property type="entry name" value="Homeodomain-like_sf"/>
</dbReference>
<dbReference type="InterPro" id="IPR002197">
    <property type="entry name" value="HTH_Fis"/>
</dbReference>
<dbReference type="InterPro" id="IPR050207">
    <property type="entry name" value="Trans_regulatory_Fis"/>
</dbReference>
<dbReference type="NCBIfam" id="NF001659">
    <property type="entry name" value="PRK00430.1"/>
    <property type="match status" value="1"/>
</dbReference>
<dbReference type="PANTHER" id="PTHR47918">
    <property type="entry name" value="DNA-BINDING PROTEIN FIS"/>
    <property type="match status" value="1"/>
</dbReference>
<dbReference type="PANTHER" id="PTHR47918:SF1">
    <property type="entry name" value="DNA-BINDING PROTEIN FIS"/>
    <property type="match status" value="1"/>
</dbReference>
<dbReference type="Pfam" id="PF02954">
    <property type="entry name" value="HTH_8"/>
    <property type="match status" value="1"/>
</dbReference>
<dbReference type="PIRSF" id="PIRSF002097">
    <property type="entry name" value="DNA-binding_Fis"/>
    <property type="match status" value="1"/>
</dbReference>
<dbReference type="PRINTS" id="PR01591">
    <property type="entry name" value="DNABINDNGFIS"/>
</dbReference>
<dbReference type="PRINTS" id="PR01590">
    <property type="entry name" value="HTHFIS"/>
</dbReference>
<dbReference type="SUPFAM" id="SSF46689">
    <property type="entry name" value="Homeodomain-like"/>
    <property type="match status" value="1"/>
</dbReference>
<gene>
    <name evidence="1" type="primary">fis</name>
    <name type="ordered locus">ECH74115_4578</name>
</gene>
<sequence>MFEQRVNSDVLTVSTVNSQDQVTQKPLRDSVKQALKNYFAQLNGQDVNDLYELVLAEVEQPLLDMVMQYTRGNQTRAALMMGINRGTLRKKLKKYGMN</sequence>
<comment type="function">
    <text evidence="1">Activates ribosomal RNA transcription. Plays a direct role in upstream activation of rRNA promoters.</text>
</comment>
<comment type="subunit">
    <text evidence="1">Homodimer.</text>
</comment>
<comment type="similarity">
    <text evidence="1">Belongs to the transcriptional regulatory Fis family.</text>
</comment>
<evidence type="ECO:0000255" key="1">
    <source>
        <dbReference type="HAMAP-Rule" id="MF_00166"/>
    </source>
</evidence>
<name>FIS_ECO5E</name>
<reference key="1">
    <citation type="journal article" date="2011" name="Proc. Natl. Acad. Sci. U.S.A.">
        <title>Genomic anatomy of Escherichia coli O157:H7 outbreaks.</title>
        <authorList>
            <person name="Eppinger M."/>
            <person name="Mammel M.K."/>
            <person name="Leclerc J.E."/>
            <person name="Ravel J."/>
            <person name="Cebula T.A."/>
        </authorList>
    </citation>
    <scope>NUCLEOTIDE SEQUENCE [LARGE SCALE GENOMIC DNA]</scope>
    <source>
        <strain>EC4115 / EHEC</strain>
    </source>
</reference>